<keyword id="KW-0067">ATP-binding</keyword>
<keyword id="KW-0963">Cytoplasm</keyword>
<keyword id="KW-0235">DNA replication</keyword>
<keyword id="KW-0238">DNA-binding</keyword>
<keyword id="KW-0446">Lipid-binding</keyword>
<keyword id="KW-0547">Nucleotide-binding</keyword>
<dbReference type="EMBL" id="CP000580">
    <property type="protein sequence ID" value="ABN95814.1"/>
    <property type="molecule type" value="Genomic_DNA"/>
</dbReference>
<dbReference type="SMR" id="A3PSD7"/>
<dbReference type="KEGG" id="mjl:Mjls_0001"/>
<dbReference type="HOGENOM" id="CLU_026910_2_0_11"/>
<dbReference type="BioCyc" id="MSP164757:G1G8C-1-MONOMER"/>
<dbReference type="GO" id="GO:0005737">
    <property type="term" value="C:cytoplasm"/>
    <property type="evidence" value="ECO:0007669"/>
    <property type="project" value="UniProtKB-SubCell"/>
</dbReference>
<dbReference type="GO" id="GO:0005886">
    <property type="term" value="C:plasma membrane"/>
    <property type="evidence" value="ECO:0007669"/>
    <property type="project" value="TreeGrafter"/>
</dbReference>
<dbReference type="GO" id="GO:0005524">
    <property type="term" value="F:ATP binding"/>
    <property type="evidence" value="ECO:0007669"/>
    <property type="project" value="UniProtKB-UniRule"/>
</dbReference>
<dbReference type="GO" id="GO:0016887">
    <property type="term" value="F:ATP hydrolysis activity"/>
    <property type="evidence" value="ECO:0007669"/>
    <property type="project" value="InterPro"/>
</dbReference>
<dbReference type="GO" id="GO:0003688">
    <property type="term" value="F:DNA replication origin binding"/>
    <property type="evidence" value="ECO:0007669"/>
    <property type="project" value="UniProtKB-UniRule"/>
</dbReference>
<dbReference type="GO" id="GO:0008289">
    <property type="term" value="F:lipid binding"/>
    <property type="evidence" value="ECO:0007669"/>
    <property type="project" value="UniProtKB-KW"/>
</dbReference>
<dbReference type="GO" id="GO:0006270">
    <property type="term" value="P:DNA replication initiation"/>
    <property type="evidence" value="ECO:0007669"/>
    <property type="project" value="UniProtKB-UniRule"/>
</dbReference>
<dbReference type="GO" id="GO:0006275">
    <property type="term" value="P:regulation of DNA replication"/>
    <property type="evidence" value="ECO:0007669"/>
    <property type="project" value="UniProtKB-UniRule"/>
</dbReference>
<dbReference type="CDD" id="cd00009">
    <property type="entry name" value="AAA"/>
    <property type="match status" value="1"/>
</dbReference>
<dbReference type="CDD" id="cd06571">
    <property type="entry name" value="Bac_DnaA_C"/>
    <property type="match status" value="1"/>
</dbReference>
<dbReference type="FunFam" id="1.10.1750.10:FF:000002">
    <property type="entry name" value="Chromosomal replication initiator protein DnaA"/>
    <property type="match status" value="1"/>
</dbReference>
<dbReference type="FunFam" id="1.10.8.60:FF:000003">
    <property type="entry name" value="Chromosomal replication initiator protein DnaA"/>
    <property type="match status" value="1"/>
</dbReference>
<dbReference type="FunFam" id="3.40.50.300:FF:000150">
    <property type="entry name" value="Chromosomal replication initiator protein DnaA"/>
    <property type="match status" value="1"/>
</dbReference>
<dbReference type="Gene3D" id="1.10.1750.10">
    <property type="match status" value="1"/>
</dbReference>
<dbReference type="Gene3D" id="1.10.8.60">
    <property type="match status" value="1"/>
</dbReference>
<dbReference type="Gene3D" id="3.30.300.180">
    <property type="match status" value="1"/>
</dbReference>
<dbReference type="Gene3D" id="3.40.50.300">
    <property type="entry name" value="P-loop containing nucleotide triphosphate hydrolases"/>
    <property type="match status" value="1"/>
</dbReference>
<dbReference type="HAMAP" id="MF_00377">
    <property type="entry name" value="DnaA_bact"/>
    <property type="match status" value="1"/>
</dbReference>
<dbReference type="InterPro" id="IPR003593">
    <property type="entry name" value="AAA+_ATPase"/>
</dbReference>
<dbReference type="InterPro" id="IPR001957">
    <property type="entry name" value="Chromosome_initiator_DnaA"/>
</dbReference>
<dbReference type="InterPro" id="IPR020591">
    <property type="entry name" value="Chromosome_initiator_DnaA-like"/>
</dbReference>
<dbReference type="InterPro" id="IPR018312">
    <property type="entry name" value="Chromosome_initiator_DnaA_CS"/>
</dbReference>
<dbReference type="InterPro" id="IPR013159">
    <property type="entry name" value="DnaA_C"/>
</dbReference>
<dbReference type="InterPro" id="IPR013317">
    <property type="entry name" value="DnaA_dom"/>
</dbReference>
<dbReference type="InterPro" id="IPR038454">
    <property type="entry name" value="DnaA_N_sf"/>
</dbReference>
<dbReference type="InterPro" id="IPR027417">
    <property type="entry name" value="P-loop_NTPase"/>
</dbReference>
<dbReference type="InterPro" id="IPR010921">
    <property type="entry name" value="Trp_repressor/repl_initiator"/>
</dbReference>
<dbReference type="NCBIfam" id="TIGR00362">
    <property type="entry name" value="DnaA"/>
    <property type="match status" value="1"/>
</dbReference>
<dbReference type="NCBIfam" id="NF010686">
    <property type="entry name" value="PRK14086.1"/>
    <property type="match status" value="1"/>
</dbReference>
<dbReference type="PANTHER" id="PTHR30050">
    <property type="entry name" value="CHROMOSOMAL REPLICATION INITIATOR PROTEIN DNAA"/>
    <property type="match status" value="1"/>
</dbReference>
<dbReference type="PANTHER" id="PTHR30050:SF2">
    <property type="entry name" value="CHROMOSOMAL REPLICATION INITIATOR PROTEIN DNAA"/>
    <property type="match status" value="1"/>
</dbReference>
<dbReference type="Pfam" id="PF00308">
    <property type="entry name" value="Bac_DnaA"/>
    <property type="match status" value="1"/>
</dbReference>
<dbReference type="Pfam" id="PF08299">
    <property type="entry name" value="Bac_DnaA_C"/>
    <property type="match status" value="1"/>
</dbReference>
<dbReference type="PRINTS" id="PR00051">
    <property type="entry name" value="DNAA"/>
</dbReference>
<dbReference type="SMART" id="SM00382">
    <property type="entry name" value="AAA"/>
    <property type="match status" value="1"/>
</dbReference>
<dbReference type="SMART" id="SM00760">
    <property type="entry name" value="Bac_DnaA_C"/>
    <property type="match status" value="1"/>
</dbReference>
<dbReference type="SUPFAM" id="SSF52540">
    <property type="entry name" value="P-loop containing nucleoside triphosphate hydrolases"/>
    <property type="match status" value="1"/>
</dbReference>
<dbReference type="SUPFAM" id="SSF48295">
    <property type="entry name" value="TrpR-like"/>
    <property type="match status" value="1"/>
</dbReference>
<dbReference type="PROSITE" id="PS01008">
    <property type="entry name" value="DNAA"/>
    <property type="match status" value="1"/>
</dbReference>
<comment type="function">
    <text evidence="1">Plays an essential role in the initiation and regulation of chromosomal replication. ATP-DnaA binds to the origin of replication (oriC) to initiate formation of the DNA replication initiation complex once per cell cycle. Binds the DnaA box (a 9 base pair repeat at the origin) and separates the double-stranded (ds)DNA. Forms a right-handed helical filament on oriC DNA; dsDNA binds to the exterior of the filament while single-stranded (ss)DNA is stabiized in the filament's interior. The ATP-DnaA-oriC complex binds and stabilizes one strand of the AT-rich DNA unwinding element (DUE), permitting loading of DNA polymerase. After initiation quickly degrades to an ADP-DnaA complex that is not apt for DNA replication. Binds acidic phospholipids.</text>
</comment>
<comment type="subunit">
    <text evidence="1">Oligomerizes as a right-handed, spiral filament on DNA at oriC.</text>
</comment>
<comment type="subcellular location">
    <subcellularLocation>
        <location evidence="1">Cytoplasm</location>
    </subcellularLocation>
</comment>
<comment type="domain">
    <text evidence="1">Domain I is involved in oligomerization and binding regulators, domain II is flexibile and of varying length in different bacteria, domain III forms the AAA+ region, while domain IV binds dsDNA.</text>
</comment>
<comment type="similarity">
    <text evidence="1">Belongs to the DnaA family.</text>
</comment>
<sequence>MTADPDPPFVAVWNTVVAELNGDPAATGPRNGDGALPTLTPQQRAWLKLVKPLVITEGFALLSVPTPFVQNEIERHLREPIITALSRHLGQRVELGVRIATPSPEDDDPPPSPVIADIDEVDEDTEARVSAEETWPRYFSRPPETPAAEDPNAVSLNRRYTFDTFVIGASNRFAHAATLAIAEAPARAYNPLFIWGESGLGKTHLLHAAGNYAQRLFPGMRVKYVSTEEFTNDFINSLRDDRKASFKRSYRDIDVLLVDDIQFIEGKEGIQEEFFHTFNTLHNANKQIVISSDRPPKQLATLEDRLRTRFEWGLITDVQPPELETRIAILRKKAQMDRLDVPDDVLELIASSIERNIRELEGALIRVTAFASLNKTPIDKSLAEIVLRDLISDASTMQISTAAIMAATAEYFETTIEELRGPGKTRALAQSRQIAMYLCRELTDLSLPKIGQAFGRDHTTVMYAEKKIRGEMAERREVFDHVKELTTRIRQRAKR</sequence>
<evidence type="ECO:0000255" key="1">
    <source>
        <dbReference type="HAMAP-Rule" id="MF_00377"/>
    </source>
</evidence>
<reference key="1">
    <citation type="submission" date="2007-02" db="EMBL/GenBank/DDBJ databases">
        <title>Complete sequence of Mycobacterium sp. JLS.</title>
        <authorList>
            <consortium name="US DOE Joint Genome Institute"/>
            <person name="Copeland A."/>
            <person name="Lucas S."/>
            <person name="Lapidus A."/>
            <person name="Barry K."/>
            <person name="Detter J.C."/>
            <person name="Glavina del Rio T."/>
            <person name="Hammon N."/>
            <person name="Israni S."/>
            <person name="Dalin E."/>
            <person name="Tice H."/>
            <person name="Pitluck S."/>
            <person name="Chain P."/>
            <person name="Malfatti S."/>
            <person name="Shin M."/>
            <person name="Vergez L."/>
            <person name="Schmutz J."/>
            <person name="Larimer F."/>
            <person name="Land M."/>
            <person name="Hauser L."/>
            <person name="Kyrpides N."/>
            <person name="Mikhailova N."/>
            <person name="Miller C.D."/>
            <person name="Anderson A.J."/>
            <person name="Sims R.C."/>
            <person name="Richardson P."/>
        </authorList>
    </citation>
    <scope>NUCLEOTIDE SEQUENCE [LARGE SCALE GENOMIC DNA]</scope>
    <source>
        <strain>JLS</strain>
    </source>
</reference>
<feature type="chain" id="PRO_1000048671" description="Chromosomal replication initiator protein DnaA">
    <location>
        <begin position="1"/>
        <end position="495"/>
    </location>
</feature>
<feature type="region of interest" description="Domain I, interacts with DnaA modulators" evidence="1">
    <location>
        <begin position="1"/>
        <end position="91"/>
    </location>
</feature>
<feature type="region of interest" description="Domain II" evidence="1">
    <location>
        <begin position="91"/>
        <end position="154"/>
    </location>
</feature>
<feature type="region of interest" description="Domain III, AAA+ region" evidence="1">
    <location>
        <begin position="155"/>
        <end position="371"/>
    </location>
</feature>
<feature type="region of interest" description="Domain IV, binds dsDNA" evidence="1">
    <location>
        <begin position="372"/>
        <end position="495"/>
    </location>
</feature>
<feature type="binding site" evidence="1">
    <location>
        <position position="199"/>
    </location>
    <ligand>
        <name>ATP</name>
        <dbReference type="ChEBI" id="CHEBI:30616"/>
    </ligand>
</feature>
<feature type="binding site" evidence="1">
    <location>
        <position position="201"/>
    </location>
    <ligand>
        <name>ATP</name>
        <dbReference type="ChEBI" id="CHEBI:30616"/>
    </ligand>
</feature>
<feature type="binding site" evidence="1">
    <location>
        <position position="202"/>
    </location>
    <ligand>
        <name>ATP</name>
        <dbReference type="ChEBI" id="CHEBI:30616"/>
    </ligand>
</feature>
<feature type="binding site" evidence="1">
    <location>
        <position position="203"/>
    </location>
    <ligand>
        <name>ATP</name>
        <dbReference type="ChEBI" id="CHEBI:30616"/>
    </ligand>
</feature>
<proteinExistence type="inferred from homology"/>
<gene>
    <name evidence="1" type="primary">dnaA</name>
    <name type="ordered locus">Mjls_0001</name>
</gene>
<organism>
    <name type="scientific">Mycobacterium sp. (strain JLS)</name>
    <dbReference type="NCBI Taxonomy" id="164757"/>
    <lineage>
        <taxon>Bacteria</taxon>
        <taxon>Bacillati</taxon>
        <taxon>Actinomycetota</taxon>
        <taxon>Actinomycetes</taxon>
        <taxon>Mycobacteriales</taxon>
        <taxon>Mycobacteriaceae</taxon>
        <taxon>Mycobacterium</taxon>
    </lineage>
</organism>
<protein>
    <recommendedName>
        <fullName evidence="1">Chromosomal replication initiator protein DnaA</fullName>
    </recommendedName>
</protein>
<name>DNAA_MYCSJ</name>
<accession>A3PSD7</accession>